<accession>Q7MA53</accession>
<protein>
    <recommendedName>
        <fullName evidence="1">Elongation factor G</fullName>
        <shortName evidence="1">EF-G</shortName>
    </recommendedName>
</protein>
<gene>
    <name evidence="1" type="primary">fusA</name>
    <name type="ordered locus">WS0470</name>
</gene>
<evidence type="ECO:0000255" key="1">
    <source>
        <dbReference type="HAMAP-Rule" id="MF_00054"/>
    </source>
</evidence>
<keyword id="KW-0963">Cytoplasm</keyword>
<keyword id="KW-0251">Elongation factor</keyword>
<keyword id="KW-0342">GTP-binding</keyword>
<keyword id="KW-0547">Nucleotide-binding</keyword>
<keyword id="KW-0648">Protein biosynthesis</keyword>
<keyword id="KW-1185">Reference proteome</keyword>
<dbReference type="EMBL" id="BX571658">
    <property type="protein sequence ID" value="CAE09610.1"/>
    <property type="molecule type" value="Genomic_DNA"/>
</dbReference>
<dbReference type="RefSeq" id="WP_011138410.1">
    <property type="nucleotide sequence ID" value="NC_005090.1"/>
</dbReference>
<dbReference type="SMR" id="Q7MA53"/>
<dbReference type="STRING" id="273121.WS0470"/>
<dbReference type="KEGG" id="wsu:WS0470"/>
<dbReference type="eggNOG" id="COG0480">
    <property type="taxonomic scope" value="Bacteria"/>
</dbReference>
<dbReference type="HOGENOM" id="CLU_002794_4_1_7"/>
<dbReference type="Proteomes" id="UP000000422">
    <property type="component" value="Chromosome"/>
</dbReference>
<dbReference type="GO" id="GO:0005737">
    <property type="term" value="C:cytoplasm"/>
    <property type="evidence" value="ECO:0007669"/>
    <property type="project" value="UniProtKB-SubCell"/>
</dbReference>
<dbReference type="GO" id="GO:0005525">
    <property type="term" value="F:GTP binding"/>
    <property type="evidence" value="ECO:0007669"/>
    <property type="project" value="UniProtKB-UniRule"/>
</dbReference>
<dbReference type="GO" id="GO:0003924">
    <property type="term" value="F:GTPase activity"/>
    <property type="evidence" value="ECO:0007669"/>
    <property type="project" value="InterPro"/>
</dbReference>
<dbReference type="GO" id="GO:0003746">
    <property type="term" value="F:translation elongation factor activity"/>
    <property type="evidence" value="ECO:0007669"/>
    <property type="project" value="UniProtKB-UniRule"/>
</dbReference>
<dbReference type="GO" id="GO:0032790">
    <property type="term" value="P:ribosome disassembly"/>
    <property type="evidence" value="ECO:0007669"/>
    <property type="project" value="TreeGrafter"/>
</dbReference>
<dbReference type="CDD" id="cd01886">
    <property type="entry name" value="EF-G"/>
    <property type="match status" value="1"/>
</dbReference>
<dbReference type="CDD" id="cd16262">
    <property type="entry name" value="EFG_III"/>
    <property type="match status" value="1"/>
</dbReference>
<dbReference type="CDD" id="cd01434">
    <property type="entry name" value="EFG_mtEFG1_IV"/>
    <property type="match status" value="1"/>
</dbReference>
<dbReference type="CDD" id="cd03713">
    <property type="entry name" value="EFG_mtEFG_C"/>
    <property type="match status" value="1"/>
</dbReference>
<dbReference type="CDD" id="cd04088">
    <property type="entry name" value="EFG_mtEFG_II"/>
    <property type="match status" value="1"/>
</dbReference>
<dbReference type="FunFam" id="2.40.30.10:FF:000006">
    <property type="entry name" value="Elongation factor G"/>
    <property type="match status" value="1"/>
</dbReference>
<dbReference type="FunFam" id="3.30.230.10:FF:000003">
    <property type="entry name" value="Elongation factor G"/>
    <property type="match status" value="1"/>
</dbReference>
<dbReference type="FunFam" id="3.30.70.240:FF:000001">
    <property type="entry name" value="Elongation factor G"/>
    <property type="match status" value="1"/>
</dbReference>
<dbReference type="FunFam" id="3.30.70.870:FF:000001">
    <property type="entry name" value="Elongation factor G"/>
    <property type="match status" value="1"/>
</dbReference>
<dbReference type="FunFam" id="3.40.50.300:FF:000029">
    <property type="entry name" value="Elongation factor G"/>
    <property type="match status" value="1"/>
</dbReference>
<dbReference type="Gene3D" id="3.30.230.10">
    <property type="match status" value="1"/>
</dbReference>
<dbReference type="Gene3D" id="3.30.70.240">
    <property type="match status" value="1"/>
</dbReference>
<dbReference type="Gene3D" id="3.30.70.870">
    <property type="entry name" value="Elongation Factor G (Translational Gtpase), domain 3"/>
    <property type="match status" value="1"/>
</dbReference>
<dbReference type="Gene3D" id="3.40.50.300">
    <property type="entry name" value="P-loop containing nucleotide triphosphate hydrolases"/>
    <property type="match status" value="1"/>
</dbReference>
<dbReference type="Gene3D" id="2.40.30.10">
    <property type="entry name" value="Translation factors"/>
    <property type="match status" value="1"/>
</dbReference>
<dbReference type="HAMAP" id="MF_00054_B">
    <property type="entry name" value="EF_G_EF_2_B"/>
    <property type="match status" value="1"/>
</dbReference>
<dbReference type="InterPro" id="IPR053905">
    <property type="entry name" value="EF-G-like_DII"/>
</dbReference>
<dbReference type="InterPro" id="IPR041095">
    <property type="entry name" value="EFG_II"/>
</dbReference>
<dbReference type="InterPro" id="IPR009022">
    <property type="entry name" value="EFG_III"/>
</dbReference>
<dbReference type="InterPro" id="IPR035647">
    <property type="entry name" value="EFG_III/V"/>
</dbReference>
<dbReference type="InterPro" id="IPR047872">
    <property type="entry name" value="EFG_IV"/>
</dbReference>
<dbReference type="InterPro" id="IPR035649">
    <property type="entry name" value="EFG_V"/>
</dbReference>
<dbReference type="InterPro" id="IPR000640">
    <property type="entry name" value="EFG_V-like"/>
</dbReference>
<dbReference type="InterPro" id="IPR031157">
    <property type="entry name" value="G_TR_CS"/>
</dbReference>
<dbReference type="InterPro" id="IPR027417">
    <property type="entry name" value="P-loop_NTPase"/>
</dbReference>
<dbReference type="InterPro" id="IPR020568">
    <property type="entry name" value="Ribosomal_Su5_D2-typ_SF"/>
</dbReference>
<dbReference type="InterPro" id="IPR014721">
    <property type="entry name" value="Ribsml_uS5_D2-typ_fold_subgr"/>
</dbReference>
<dbReference type="InterPro" id="IPR005225">
    <property type="entry name" value="Small_GTP-bd"/>
</dbReference>
<dbReference type="InterPro" id="IPR000795">
    <property type="entry name" value="T_Tr_GTP-bd_dom"/>
</dbReference>
<dbReference type="InterPro" id="IPR009000">
    <property type="entry name" value="Transl_B-barrel_sf"/>
</dbReference>
<dbReference type="InterPro" id="IPR004540">
    <property type="entry name" value="Transl_elong_EFG/EF2"/>
</dbReference>
<dbReference type="InterPro" id="IPR005517">
    <property type="entry name" value="Transl_elong_EFG/EF2_IV"/>
</dbReference>
<dbReference type="NCBIfam" id="TIGR00484">
    <property type="entry name" value="EF-G"/>
    <property type="match status" value="1"/>
</dbReference>
<dbReference type="NCBIfam" id="NF009379">
    <property type="entry name" value="PRK12740.1-3"/>
    <property type="match status" value="1"/>
</dbReference>
<dbReference type="NCBIfam" id="NF009381">
    <property type="entry name" value="PRK12740.1-5"/>
    <property type="match status" value="1"/>
</dbReference>
<dbReference type="NCBIfam" id="NF009891">
    <property type="entry name" value="PRK13351.1-1"/>
    <property type="match status" value="1"/>
</dbReference>
<dbReference type="NCBIfam" id="TIGR00231">
    <property type="entry name" value="small_GTP"/>
    <property type="match status" value="1"/>
</dbReference>
<dbReference type="PANTHER" id="PTHR43261:SF1">
    <property type="entry name" value="RIBOSOME-RELEASING FACTOR 2, MITOCHONDRIAL"/>
    <property type="match status" value="1"/>
</dbReference>
<dbReference type="PANTHER" id="PTHR43261">
    <property type="entry name" value="TRANSLATION ELONGATION FACTOR G-RELATED"/>
    <property type="match status" value="1"/>
</dbReference>
<dbReference type="Pfam" id="PF22042">
    <property type="entry name" value="EF-G_D2"/>
    <property type="match status" value="1"/>
</dbReference>
<dbReference type="Pfam" id="PF00679">
    <property type="entry name" value="EFG_C"/>
    <property type="match status" value="1"/>
</dbReference>
<dbReference type="Pfam" id="PF14492">
    <property type="entry name" value="EFG_III"/>
    <property type="match status" value="1"/>
</dbReference>
<dbReference type="Pfam" id="PF03764">
    <property type="entry name" value="EFG_IV"/>
    <property type="match status" value="1"/>
</dbReference>
<dbReference type="Pfam" id="PF00009">
    <property type="entry name" value="GTP_EFTU"/>
    <property type="match status" value="1"/>
</dbReference>
<dbReference type="PRINTS" id="PR00315">
    <property type="entry name" value="ELONGATNFCT"/>
</dbReference>
<dbReference type="SMART" id="SM00838">
    <property type="entry name" value="EFG_C"/>
    <property type="match status" value="1"/>
</dbReference>
<dbReference type="SMART" id="SM00889">
    <property type="entry name" value="EFG_IV"/>
    <property type="match status" value="1"/>
</dbReference>
<dbReference type="SUPFAM" id="SSF54980">
    <property type="entry name" value="EF-G C-terminal domain-like"/>
    <property type="match status" value="2"/>
</dbReference>
<dbReference type="SUPFAM" id="SSF52540">
    <property type="entry name" value="P-loop containing nucleoside triphosphate hydrolases"/>
    <property type="match status" value="1"/>
</dbReference>
<dbReference type="SUPFAM" id="SSF54211">
    <property type="entry name" value="Ribosomal protein S5 domain 2-like"/>
    <property type="match status" value="1"/>
</dbReference>
<dbReference type="SUPFAM" id="SSF50447">
    <property type="entry name" value="Translation proteins"/>
    <property type="match status" value="1"/>
</dbReference>
<dbReference type="PROSITE" id="PS00301">
    <property type="entry name" value="G_TR_1"/>
    <property type="match status" value="1"/>
</dbReference>
<dbReference type="PROSITE" id="PS51722">
    <property type="entry name" value="G_TR_2"/>
    <property type="match status" value="1"/>
</dbReference>
<feature type="chain" id="PRO_0000091268" description="Elongation factor G">
    <location>
        <begin position="1"/>
        <end position="693"/>
    </location>
</feature>
<feature type="domain" description="tr-type G">
    <location>
        <begin position="8"/>
        <end position="283"/>
    </location>
</feature>
<feature type="binding site" evidence="1">
    <location>
        <begin position="17"/>
        <end position="24"/>
    </location>
    <ligand>
        <name>GTP</name>
        <dbReference type="ChEBI" id="CHEBI:37565"/>
    </ligand>
</feature>
<feature type="binding site" evidence="1">
    <location>
        <begin position="81"/>
        <end position="85"/>
    </location>
    <ligand>
        <name>GTP</name>
        <dbReference type="ChEBI" id="CHEBI:37565"/>
    </ligand>
</feature>
<feature type="binding site" evidence="1">
    <location>
        <begin position="135"/>
        <end position="138"/>
    </location>
    <ligand>
        <name>GTP</name>
        <dbReference type="ChEBI" id="CHEBI:37565"/>
    </ligand>
</feature>
<name>EFG_WOLSU</name>
<comment type="function">
    <text evidence="1">Catalyzes the GTP-dependent ribosomal translocation step during translation elongation. During this step, the ribosome changes from the pre-translocational (PRE) to the post-translocational (POST) state as the newly formed A-site-bound peptidyl-tRNA and P-site-bound deacylated tRNA move to the P and E sites, respectively. Catalyzes the coordinated movement of the two tRNA molecules, the mRNA and conformational changes in the ribosome.</text>
</comment>
<comment type="subcellular location">
    <subcellularLocation>
        <location evidence="1">Cytoplasm</location>
    </subcellularLocation>
</comment>
<comment type="similarity">
    <text evidence="1">Belongs to the TRAFAC class translation factor GTPase superfamily. Classic translation factor GTPase family. EF-G/EF-2 subfamily.</text>
</comment>
<sequence length="693" mass="76901">MARKIPLNRIRNIGIAAHIDAGKTTTTERILFYTGVSHKVGEVHDGAATMDWMEQEKERGITITSAATTCFWKDYQVNIIDTPGHVDFTIEVERSMRVLDGAVAVFCSVGGVQPQSETVWRQANKYGVPRMVFVNKMDRIGANFYNVESQISDRLKARPVPVVIPVGAEDTFKGVIDLLQMKALIWNDETMGAKYDIEEIPADLVEKANEYREKMIEAAAEQDEALMEKYLNGEELTTEEIKRGLKIGCHAMAIIPMLCGSSFKNKGVQTLLDAVIDYLPAPTEVADIHGVDAKDETKEISVQSSDEGEFAGLAFKIMTDPFVGQLTFVRVYRGSLESGSYVYNSTKGKKERVGRLLKMHANKREDIKEIYAGEICAFVGLKETLTGDTLCSEKEPVILERMEFPEPVISIAVEPKTKADQEKMGIALNKLAEEDPSFRVNSDEETGQTIISGMGELHLEIIVDRMKREFKVEAEVGQPQVAFRETVRKAVNKECKYAKQSGGRGQYGHVFIKLEPQEAGKGYEFVNDISGGVIPKEYIPAVDKGIKEAMQSGVLAGYPVVDFKVTLYDGSYHDVDSSEMAFKIAGSMAFKDAAREASPVLLEPIMKVEVEVPEDYMGDVIGDLNRRRGQINSMGDRSGIKVINAFVPLAEMFGYSTDLRSATQGRGTYTMEFSHYGEVPGNISKEIIEKRKG</sequence>
<proteinExistence type="inferred from homology"/>
<reference key="1">
    <citation type="journal article" date="2003" name="Proc. Natl. Acad. Sci. U.S.A.">
        <title>Complete genome sequence and analysis of Wolinella succinogenes.</title>
        <authorList>
            <person name="Baar C."/>
            <person name="Eppinger M."/>
            <person name="Raddatz G."/>
            <person name="Simon J."/>
            <person name="Lanz C."/>
            <person name="Klimmek O."/>
            <person name="Nandakumar R."/>
            <person name="Gross R."/>
            <person name="Rosinus A."/>
            <person name="Keller H."/>
            <person name="Jagtap P."/>
            <person name="Linke B."/>
            <person name="Meyer F."/>
            <person name="Lederer H."/>
            <person name="Schuster S.C."/>
        </authorList>
    </citation>
    <scope>NUCLEOTIDE SEQUENCE [LARGE SCALE GENOMIC DNA]</scope>
    <source>
        <strain>ATCC 29543 / DSM 1740 / CCUG 13145 / JCM 31913 / LMG 7466 / NCTC 11488 / FDC 602W</strain>
    </source>
</reference>
<organism>
    <name type="scientific">Wolinella succinogenes (strain ATCC 29543 / DSM 1740 / CCUG 13145 / JCM 31913 / LMG 7466 / NCTC 11488 / FDC 602W)</name>
    <name type="common">Vibrio succinogenes</name>
    <dbReference type="NCBI Taxonomy" id="273121"/>
    <lineage>
        <taxon>Bacteria</taxon>
        <taxon>Pseudomonadati</taxon>
        <taxon>Campylobacterota</taxon>
        <taxon>Epsilonproteobacteria</taxon>
        <taxon>Campylobacterales</taxon>
        <taxon>Helicobacteraceae</taxon>
        <taxon>Wolinella</taxon>
    </lineage>
</organism>